<accession>Q920R0</accession>
<accession>G5E868</accession>
<accession>Q8JZR1</accession>
<accession>Q9CXJ3</accession>
<dbReference type="EMBL" id="AB053307">
    <property type="protein sequence ID" value="BAB69016.1"/>
    <property type="molecule type" value="mRNA"/>
</dbReference>
<dbReference type="EMBL" id="AC153652">
    <property type="status" value="NOT_ANNOTATED_CDS"/>
    <property type="molecule type" value="Genomic_DNA"/>
</dbReference>
<dbReference type="EMBL" id="CH466548">
    <property type="protein sequence ID" value="EDL00124.1"/>
    <property type="molecule type" value="Genomic_DNA"/>
</dbReference>
<dbReference type="EMBL" id="BC031479">
    <property type="protein sequence ID" value="AAH31479.1"/>
    <property type="molecule type" value="mRNA"/>
</dbReference>
<dbReference type="EMBL" id="BC046828">
    <property type="protein sequence ID" value="AAH46828.1"/>
    <property type="molecule type" value="mRNA"/>
</dbReference>
<dbReference type="EMBL" id="AK014320">
    <property type="protein sequence ID" value="BAB29271.2"/>
    <property type="molecule type" value="mRNA"/>
</dbReference>
<dbReference type="CCDS" id="CCDS35583.1">
    <molecule id="Q920R0-1"/>
</dbReference>
<dbReference type="RefSeq" id="NP_001153420.2">
    <molecule id="Q920R0-1"/>
    <property type="nucleotide sequence ID" value="NM_001159948.2"/>
</dbReference>
<dbReference type="RefSeq" id="NP_082993.4">
    <molecule id="Q920R0-1"/>
    <property type="nucleotide sequence ID" value="NM_028717.6"/>
</dbReference>
<dbReference type="RefSeq" id="NP_666221.1">
    <property type="nucleotide sequence ID" value="NM_146109.3"/>
</dbReference>
<dbReference type="SMR" id="Q920R0"/>
<dbReference type="BioGRID" id="216427">
    <property type="interactions" value="5"/>
</dbReference>
<dbReference type="FunCoup" id="Q920R0">
    <property type="interactions" value="1419"/>
</dbReference>
<dbReference type="STRING" id="10090.ENSMUSP00000027178"/>
<dbReference type="GlyGen" id="Q920R0">
    <property type="glycosylation" value="3 sites, 1 O-linked glycan (3 sites)"/>
</dbReference>
<dbReference type="iPTMnet" id="Q920R0"/>
<dbReference type="PhosphoSitePlus" id="Q920R0"/>
<dbReference type="SwissPalm" id="Q920R0"/>
<dbReference type="jPOST" id="Q920R0"/>
<dbReference type="PaxDb" id="10090-ENSMUSP00000027178"/>
<dbReference type="PeptideAtlas" id="Q920R0"/>
<dbReference type="ProteomicsDB" id="296199">
    <molecule id="Q920R0-1"/>
</dbReference>
<dbReference type="ProteomicsDB" id="296200">
    <molecule id="Q920R0-2"/>
</dbReference>
<dbReference type="Pumba" id="Q920R0"/>
<dbReference type="Antibodypedia" id="34146">
    <property type="antibodies" value="257 antibodies from 35 providers"/>
</dbReference>
<dbReference type="DNASU" id="74018"/>
<dbReference type="Ensembl" id="ENSMUST00000027178.13">
    <molecule id="Q920R0-1"/>
    <property type="protein sequence ID" value="ENSMUSP00000027178.7"/>
    <property type="gene ID" value="ENSMUSG00000026024.15"/>
</dbReference>
<dbReference type="Ensembl" id="ENSMUST00000163058.2">
    <molecule id="Q920R0-1"/>
    <property type="protein sequence ID" value="ENSMUSP00000125753.2"/>
    <property type="gene ID" value="ENSMUSG00000026024.15"/>
</dbReference>
<dbReference type="GeneID" id="74018"/>
<dbReference type="KEGG" id="mmu:74018"/>
<dbReference type="UCSC" id="uc007bdm.2">
    <molecule id="Q920R0-1"/>
    <property type="organism name" value="mouse"/>
</dbReference>
<dbReference type="UCSC" id="uc007bdn.2">
    <molecule id="Q920R0-2"/>
    <property type="organism name" value="mouse"/>
</dbReference>
<dbReference type="AGR" id="MGI:1921268"/>
<dbReference type="CTD" id="57679"/>
<dbReference type="MGI" id="MGI:1921268">
    <property type="gene designation" value="Als2"/>
</dbReference>
<dbReference type="VEuPathDB" id="HostDB:ENSMUSG00000026024"/>
<dbReference type="eggNOG" id="KOG0231">
    <property type="taxonomic scope" value="Eukaryota"/>
</dbReference>
<dbReference type="eggNOG" id="KOG1426">
    <property type="taxonomic scope" value="Eukaryota"/>
</dbReference>
<dbReference type="GeneTree" id="ENSGT00940000155861"/>
<dbReference type="HOGENOM" id="CLU_003333_0_0_1"/>
<dbReference type="InParanoid" id="Q920R0"/>
<dbReference type="OMA" id="CYLTGQH"/>
<dbReference type="OrthoDB" id="48314at2759"/>
<dbReference type="PhylomeDB" id="Q920R0"/>
<dbReference type="TreeFam" id="TF331793"/>
<dbReference type="Reactome" id="R-MMU-8876198">
    <property type="pathway name" value="RAB GEFs exchange GTP for GDP on RABs"/>
</dbReference>
<dbReference type="Reactome" id="R-MMU-9013149">
    <property type="pathway name" value="RAC1 GTPase cycle"/>
</dbReference>
<dbReference type="BioGRID-ORCS" id="74018">
    <property type="hits" value="3 hits in 77 CRISPR screens"/>
</dbReference>
<dbReference type="ChiTaRS" id="Als2">
    <property type="organism name" value="mouse"/>
</dbReference>
<dbReference type="PRO" id="PR:Q920R0"/>
<dbReference type="Proteomes" id="UP000000589">
    <property type="component" value="Chromosome 1"/>
</dbReference>
<dbReference type="RNAct" id="Q920R0">
    <property type="molecule type" value="protein"/>
</dbReference>
<dbReference type="Bgee" id="ENSMUSG00000026024">
    <property type="expression patterns" value="Expressed in retinal neural layer and 110 other cell types or tissues"/>
</dbReference>
<dbReference type="ExpressionAtlas" id="Q920R0">
    <property type="expression patterns" value="baseline and differential"/>
</dbReference>
<dbReference type="GO" id="GO:0005813">
    <property type="term" value="C:centrosome"/>
    <property type="evidence" value="ECO:0000314"/>
    <property type="project" value="MGI"/>
</dbReference>
<dbReference type="GO" id="GO:0005737">
    <property type="term" value="C:cytoplasm"/>
    <property type="evidence" value="ECO:0000314"/>
    <property type="project" value="MGI"/>
</dbReference>
<dbReference type="GO" id="GO:0005829">
    <property type="term" value="C:cytosol"/>
    <property type="evidence" value="ECO:0000250"/>
    <property type="project" value="UniProtKB"/>
</dbReference>
<dbReference type="GO" id="GO:0030425">
    <property type="term" value="C:dendrite"/>
    <property type="evidence" value="ECO:0000250"/>
    <property type="project" value="UniProtKB"/>
</dbReference>
<dbReference type="GO" id="GO:0043197">
    <property type="term" value="C:dendritic spine"/>
    <property type="evidence" value="ECO:0000314"/>
    <property type="project" value="MGI"/>
</dbReference>
<dbReference type="GO" id="GO:0005769">
    <property type="term" value="C:early endosome"/>
    <property type="evidence" value="ECO:0000250"/>
    <property type="project" value="UniProtKB"/>
</dbReference>
<dbReference type="GO" id="GO:0098978">
    <property type="term" value="C:glutamatergic synapse"/>
    <property type="evidence" value="ECO:0000314"/>
    <property type="project" value="SynGO"/>
</dbReference>
<dbReference type="GO" id="GO:0030426">
    <property type="term" value="C:growth cone"/>
    <property type="evidence" value="ECO:0000250"/>
    <property type="project" value="UniProtKB"/>
</dbReference>
<dbReference type="GO" id="GO:0030027">
    <property type="term" value="C:lamellipodium"/>
    <property type="evidence" value="ECO:0000314"/>
    <property type="project" value="UniProtKB"/>
</dbReference>
<dbReference type="GO" id="GO:0005634">
    <property type="term" value="C:nucleus"/>
    <property type="evidence" value="ECO:0000266"/>
    <property type="project" value="MGI"/>
</dbReference>
<dbReference type="GO" id="GO:0014069">
    <property type="term" value="C:postsynaptic density"/>
    <property type="evidence" value="ECO:0000314"/>
    <property type="project" value="MGI"/>
</dbReference>
<dbReference type="GO" id="GO:0032991">
    <property type="term" value="C:protein-containing complex"/>
    <property type="evidence" value="ECO:0000250"/>
    <property type="project" value="UniProtKB"/>
</dbReference>
<dbReference type="GO" id="GO:0001726">
    <property type="term" value="C:ruffle"/>
    <property type="evidence" value="ECO:0000314"/>
    <property type="project" value="UniProtKB"/>
</dbReference>
<dbReference type="GO" id="GO:0031982">
    <property type="term" value="C:vesicle"/>
    <property type="evidence" value="ECO:0000250"/>
    <property type="project" value="UniProtKB"/>
</dbReference>
<dbReference type="GO" id="GO:0005096">
    <property type="term" value="F:GTPase activator activity"/>
    <property type="evidence" value="ECO:0000266"/>
    <property type="project" value="MGI"/>
</dbReference>
<dbReference type="GO" id="GO:0005085">
    <property type="term" value="F:guanyl-nucleotide exchange factor activity"/>
    <property type="evidence" value="ECO:0007669"/>
    <property type="project" value="UniProtKB-KW"/>
</dbReference>
<dbReference type="GO" id="GO:0042802">
    <property type="term" value="F:identical protein binding"/>
    <property type="evidence" value="ECO:0000266"/>
    <property type="project" value="MGI"/>
</dbReference>
<dbReference type="GO" id="GO:0042803">
    <property type="term" value="F:protein homodimerization activity"/>
    <property type="evidence" value="ECO:0000250"/>
    <property type="project" value="UniProtKB"/>
</dbReference>
<dbReference type="GO" id="GO:0043539">
    <property type="term" value="F:protein serine/threonine kinase activator activity"/>
    <property type="evidence" value="ECO:0000250"/>
    <property type="project" value="UniProtKB"/>
</dbReference>
<dbReference type="GO" id="GO:0031267">
    <property type="term" value="F:small GTPase binding"/>
    <property type="evidence" value="ECO:0000250"/>
    <property type="project" value="UniProtKB"/>
</dbReference>
<dbReference type="GO" id="GO:0001662">
    <property type="term" value="P:behavioral fear response"/>
    <property type="evidence" value="ECO:0000315"/>
    <property type="project" value="MGI"/>
</dbReference>
<dbReference type="GO" id="GO:0016197">
    <property type="term" value="P:endosomal transport"/>
    <property type="evidence" value="ECO:0000315"/>
    <property type="project" value="MGI"/>
</dbReference>
<dbReference type="GO" id="GO:0007032">
    <property type="term" value="P:endosome organization"/>
    <property type="evidence" value="ECO:0000266"/>
    <property type="project" value="MGI"/>
</dbReference>
<dbReference type="GO" id="GO:0007626">
    <property type="term" value="P:locomotory behavior"/>
    <property type="evidence" value="ECO:0000315"/>
    <property type="project" value="MGI"/>
</dbReference>
<dbReference type="GO" id="GO:0007041">
    <property type="term" value="P:lysosomal transport"/>
    <property type="evidence" value="ECO:0000266"/>
    <property type="project" value="MGI"/>
</dbReference>
<dbReference type="GO" id="GO:0007528">
    <property type="term" value="P:neuromuscular junction development"/>
    <property type="evidence" value="ECO:0000315"/>
    <property type="project" value="MGI"/>
</dbReference>
<dbReference type="GO" id="GO:0048812">
    <property type="term" value="P:neuron projection morphogenesis"/>
    <property type="evidence" value="ECO:0000250"/>
    <property type="project" value="UniProtKB"/>
</dbReference>
<dbReference type="GO" id="GO:0043547">
    <property type="term" value="P:positive regulation of GTPase activity"/>
    <property type="evidence" value="ECO:0000250"/>
    <property type="project" value="UniProtKB"/>
</dbReference>
<dbReference type="GO" id="GO:0045860">
    <property type="term" value="P:positive regulation of protein kinase activity"/>
    <property type="evidence" value="ECO:0000250"/>
    <property type="project" value="UniProtKB"/>
</dbReference>
<dbReference type="GO" id="GO:0051260">
    <property type="term" value="P:protein homooligomerization"/>
    <property type="evidence" value="ECO:0000266"/>
    <property type="project" value="MGI"/>
</dbReference>
<dbReference type="GO" id="GO:0008104">
    <property type="term" value="P:protein localization"/>
    <property type="evidence" value="ECO:0000315"/>
    <property type="project" value="MGI"/>
</dbReference>
<dbReference type="GO" id="GO:0001881">
    <property type="term" value="P:receptor recycling"/>
    <property type="evidence" value="ECO:0000315"/>
    <property type="project" value="MGI"/>
</dbReference>
<dbReference type="GO" id="GO:0051036">
    <property type="term" value="P:regulation of endosome size"/>
    <property type="evidence" value="ECO:0000250"/>
    <property type="project" value="UniProtKB"/>
</dbReference>
<dbReference type="GO" id="GO:0099072">
    <property type="term" value="P:regulation of postsynaptic membrane neurotransmitter receptor levels"/>
    <property type="evidence" value="ECO:0000314"/>
    <property type="project" value="SynGO"/>
</dbReference>
<dbReference type="GO" id="GO:0006979">
    <property type="term" value="P:response to oxidative stress"/>
    <property type="evidence" value="ECO:0000315"/>
    <property type="project" value="MGI"/>
</dbReference>
<dbReference type="GO" id="GO:0035249">
    <property type="term" value="P:synaptic transmission, glutamatergic"/>
    <property type="evidence" value="ECO:0000315"/>
    <property type="project" value="MGI"/>
</dbReference>
<dbReference type="GO" id="GO:0016050">
    <property type="term" value="P:vesicle organization"/>
    <property type="evidence" value="ECO:0000314"/>
    <property type="project" value="MGI"/>
</dbReference>
<dbReference type="CDD" id="cd13269">
    <property type="entry name" value="PH_alsin"/>
    <property type="match status" value="1"/>
</dbReference>
<dbReference type="FunFam" id="1.20.900.10:FF:000026">
    <property type="entry name" value="Alsin isoform X1"/>
    <property type="match status" value="1"/>
</dbReference>
<dbReference type="FunFam" id="1.20.1050.80:FF:000005">
    <property type="entry name" value="alsin isoform X1"/>
    <property type="match status" value="1"/>
</dbReference>
<dbReference type="FunFam" id="2.130.10.30:FF:000015">
    <property type="entry name" value="alsin isoform X1"/>
    <property type="match status" value="1"/>
</dbReference>
<dbReference type="FunFam" id="2.130.10.30:FF:000019">
    <property type="entry name" value="alsin isoform X1"/>
    <property type="match status" value="1"/>
</dbReference>
<dbReference type="FunFam" id="2.20.110.10:FF:000009">
    <property type="entry name" value="alsin isoform X1"/>
    <property type="match status" value="1"/>
</dbReference>
<dbReference type="Gene3D" id="1.20.900.10">
    <property type="entry name" value="Dbl homology (DH) domain"/>
    <property type="match status" value="1"/>
</dbReference>
<dbReference type="Gene3D" id="2.20.110.10">
    <property type="entry name" value="Histone H3 K4-specific methyltransferase SET7/9 N-terminal domain"/>
    <property type="match status" value="3"/>
</dbReference>
<dbReference type="Gene3D" id="2.30.29.30">
    <property type="entry name" value="Pleckstrin-homology domain (PH domain)/Phosphotyrosine-binding domain (PTB)"/>
    <property type="match status" value="1"/>
</dbReference>
<dbReference type="Gene3D" id="2.130.10.30">
    <property type="entry name" value="Regulator of chromosome condensation 1/beta-lactamase-inhibitor protein II"/>
    <property type="match status" value="2"/>
</dbReference>
<dbReference type="Gene3D" id="1.20.1050.80">
    <property type="entry name" value="VPS9 domain"/>
    <property type="match status" value="1"/>
</dbReference>
<dbReference type="InterPro" id="IPR051984">
    <property type="entry name" value="Alsin_GEFs/MotNeuronReg"/>
</dbReference>
<dbReference type="InterPro" id="IPR035899">
    <property type="entry name" value="DBL_dom_sf"/>
</dbReference>
<dbReference type="InterPro" id="IPR000219">
    <property type="entry name" value="DH_dom"/>
</dbReference>
<dbReference type="InterPro" id="IPR003409">
    <property type="entry name" value="MORN"/>
</dbReference>
<dbReference type="InterPro" id="IPR011993">
    <property type="entry name" value="PH-like_dom_sf"/>
</dbReference>
<dbReference type="InterPro" id="IPR009091">
    <property type="entry name" value="RCC1/BLIP-II"/>
</dbReference>
<dbReference type="InterPro" id="IPR000408">
    <property type="entry name" value="Reg_chr_condens"/>
</dbReference>
<dbReference type="InterPro" id="IPR003123">
    <property type="entry name" value="VPS9"/>
</dbReference>
<dbReference type="InterPro" id="IPR037191">
    <property type="entry name" value="VPS9_dom_sf"/>
</dbReference>
<dbReference type="PANTHER" id="PTHR46089:SF3">
    <property type="entry name" value="ALSIN"/>
    <property type="match status" value="1"/>
</dbReference>
<dbReference type="PANTHER" id="PTHR46089">
    <property type="entry name" value="ALSIN HOMOLOG"/>
    <property type="match status" value="1"/>
</dbReference>
<dbReference type="Pfam" id="PF25389">
    <property type="entry name" value="DH_alsin"/>
    <property type="match status" value="1"/>
</dbReference>
<dbReference type="Pfam" id="PF02493">
    <property type="entry name" value="MORN"/>
    <property type="match status" value="7"/>
</dbReference>
<dbReference type="Pfam" id="PF25383">
    <property type="entry name" value="PH_alsin"/>
    <property type="match status" value="1"/>
</dbReference>
<dbReference type="Pfam" id="PF00415">
    <property type="entry name" value="RCC1"/>
    <property type="match status" value="4"/>
</dbReference>
<dbReference type="Pfam" id="PF02204">
    <property type="entry name" value="VPS9"/>
    <property type="match status" value="1"/>
</dbReference>
<dbReference type="PRINTS" id="PR00633">
    <property type="entry name" value="RCCNDNSATION"/>
</dbReference>
<dbReference type="SMART" id="SM00698">
    <property type="entry name" value="MORN"/>
    <property type="match status" value="8"/>
</dbReference>
<dbReference type="SUPFAM" id="SSF48065">
    <property type="entry name" value="DBL homology domain (DH-domain)"/>
    <property type="match status" value="1"/>
</dbReference>
<dbReference type="SUPFAM" id="SSF82185">
    <property type="entry name" value="Histone H3 K4-specific methyltransferase SET7/9 N-terminal domain"/>
    <property type="match status" value="2"/>
</dbReference>
<dbReference type="SUPFAM" id="SSF50729">
    <property type="entry name" value="PH domain-like"/>
    <property type="match status" value="1"/>
</dbReference>
<dbReference type="SUPFAM" id="SSF50985">
    <property type="entry name" value="RCC1/BLIP-II"/>
    <property type="match status" value="2"/>
</dbReference>
<dbReference type="SUPFAM" id="SSF109993">
    <property type="entry name" value="VPS9 domain"/>
    <property type="match status" value="1"/>
</dbReference>
<dbReference type="PROSITE" id="PS50010">
    <property type="entry name" value="DH_2"/>
    <property type="match status" value="1"/>
</dbReference>
<dbReference type="PROSITE" id="PS00626">
    <property type="entry name" value="RCC1_2"/>
    <property type="match status" value="2"/>
</dbReference>
<dbReference type="PROSITE" id="PS50012">
    <property type="entry name" value="RCC1_3"/>
    <property type="match status" value="4"/>
</dbReference>
<dbReference type="PROSITE" id="PS51205">
    <property type="entry name" value="VPS9"/>
    <property type="match status" value="1"/>
</dbReference>
<feature type="chain" id="PRO_0000080904" description="Alsin">
    <location>
        <begin position="1"/>
        <end position="1651"/>
    </location>
</feature>
<feature type="repeat" description="RCC1 1" evidence="8">
    <location>
        <begin position="59"/>
        <end position="108"/>
    </location>
</feature>
<feature type="repeat" description="RCC1 2" evidence="8">
    <location>
        <begin position="109"/>
        <end position="167"/>
    </location>
</feature>
<feature type="repeat" description="RCC1 3" evidence="8">
    <location>
        <begin position="169"/>
        <end position="218"/>
    </location>
</feature>
<feature type="repeat" description="RCC1 4" evidence="8">
    <location>
        <begin position="519"/>
        <end position="570"/>
    </location>
</feature>
<feature type="repeat" description="RCC1 5" evidence="8">
    <location>
        <begin position="572"/>
        <end position="621"/>
    </location>
</feature>
<feature type="domain" description="DH" evidence="4">
    <location>
        <begin position="684"/>
        <end position="879"/>
    </location>
</feature>
<feature type="domain" description="PH" evidence="8">
    <location>
        <begin position="895"/>
        <end position="1001"/>
    </location>
</feature>
<feature type="repeat" description="MORN 1">
    <location>
        <begin position="1043"/>
        <end position="1065"/>
    </location>
</feature>
<feature type="repeat" description="MORN 2">
    <location>
        <begin position="1066"/>
        <end position="1088"/>
    </location>
</feature>
<feature type="repeat" description="MORN 3">
    <location>
        <begin position="1094"/>
        <end position="1116"/>
    </location>
</feature>
<feature type="repeat" description="MORN 4">
    <location>
        <begin position="1117"/>
        <end position="1139"/>
    </location>
</feature>
<feature type="repeat" description="MORN 5">
    <location>
        <begin position="1145"/>
        <end position="1167"/>
    </location>
</feature>
<feature type="repeat" description="MORN 6">
    <location>
        <begin position="1169"/>
        <end position="1191"/>
    </location>
</feature>
<feature type="repeat" description="MORN 7">
    <location>
        <begin position="1192"/>
        <end position="1214"/>
    </location>
</feature>
<feature type="repeat" description="MORN 8">
    <location>
        <begin position="1215"/>
        <end position="1238"/>
    </location>
</feature>
<feature type="domain" description="VPS9" evidence="5">
    <location>
        <begin position="1507"/>
        <end position="1651"/>
    </location>
</feature>
<feature type="region of interest" description="Disordered" evidence="6">
    <location>
        <begin position="425"/>
        <end position="462"/>
    </location>
</feature>
<feature type="compositionally biased region" description="Polar residues" evidence="6">
    <location>
        <begin position="427"/>
        <end position="437"/>
    </location>
</feature>
<feature type="compositionally biased region" description="Basic and acidic residues" evidence="6">
    <location>
        <begin position="439"/>
        <end position="449"/>
    </location>
</feature>
<feature type="compositionally biased region" description="Polar residues" evidence="6">
    <location>
        <begin position="450"/>
        <end position="461"/>
    </location>
</feature>
<feature type="modified residue" description="Phosphoserine" evidence="3">
    <location>
        <position position="459"/>
    </location>
</feature>
<feature type="modified residue" description="Phosphoserine" evidence="3">
    <location>
        <position position="460"/>
    </location>
</feature>
<feature type="modified residue" description="Phosphoserine" evidence="12 13">
    <location>
        <position position="477"/>
    </location>
</feature>
<feature type="modified residue" description="Phosphoserine" evidence="12 13">
    <location>
        <position position="486"/>
    </location>
</feature>
<feature type="modified residue" description="Phosphothreonine" evidence="2">
    <location>
        <position position="504"/>
    </location>
</feature>
<feature type="modified residue" description="N6-acetyllysine" evidence="14">
    <location>
        <position position="527"/>
    </location>
</feature>
<feature type="modified residue" description="Phosphoserine" evidence="2">
    <location>
        <position position="1329"/>
    </location>
</feature>
<feature type="splice variant" id="VSP_050525" description="In isoform 2." evidence="7">
    <original>TSPEYQKLQDSSSCYESLALHLGKKRKEAEYTLSFWKTFPGKMTDSLRKPERRLLCESSNRALSLQHAGRFSVN</original>
    <variation>VGFVCAPPNTREAKSQSSLFALSLLKMLGPGAGEMAQWVRAPDCSSEGLEFKSQQPHGGSQPPVMRSDALFWSV</variation>
    <location>
        <begin position="855"/>
        <end position="928"/>
    </location>
</feature>
<feature type="splice variant" id="VSP_050526" description="In isoform 2." evidence="7">
    <location>
        <begin position="929"/>
        <end position="1651"/>
    </location>
</feature>
<feature type="sequence conflict" description="In Ref. 1; BAB69016 and 4; AAH31479." evidence="8" ref="1 4">
    <original>V</original>
    <variation>I</variation>
    <location>
        <position position="318"/>
    </location>
</feature>
<feature type="sequence conflict" description="In Ref. 1; BAB69016 and 4; AAH31479." evidence="8" ref="1 4">
    <original>L</original>
    <variation>S</variation>
    <location>
        <position position="469"/>
    </location>
</feature>
<feature type="sequence conflict" description="In Ref. 4; AAH46828." evidence="8" ref="4">
    <original>V</original>
    <variation>F</variation>
    <location>
        <position position="764"/>
    </location>
</feature>
<feature type="sequence conflict" description="In Ref. 5; BAB29271." evidence="8" ref="5">
    <original>V</original>
    <variation>L</variation>
    <location>
        <position position="1206"/>
    </location>
</feature>
<feature type="sequence conflict" description="In Ref. 1; BAB69016." evidence="8" ref="1">
    <original>R</original>
    <variation>H</variation>
    <location>
        <position position="1296"/>
    </location>
</feature>
<feature type="sequence conflict" description="In Ref. 1; BAB69016." evidence="8" ref="1">
    <original>S</original>
    <variation>L</variation>
    <location>
        <position position="1452"/>
    </location>
</feature>
<evidence type="ECO:0000250" key="1"/>
<evidence type="ECO:0000250" key="2">
    <source>
        <dbReference type="UniProtKB" id="P0C5Y8"/>
    </source>
</evidence>
<evidence type="ECO:0000250" key="3">
    <source>
        <dbReference type="UniProtKB" id="Q96Q42"/>
    </source>
</evidence>
<evidence type="ECO:0000255" key="4">
    <source>
        <dbReference type="PROSITE-ProRule" id="PRU00062"/>
    </source>
</evidence>
<evidence type="ECO:0000255" key="5">
    <source>
        <dbReference type="PROSITE-ProRule" id="PRU00550"/>
    </source>
</evidence>
<evidence type="ECO:0000256" key="6">
    <source>
        <dbReference type="SAM" id="MobiDB-lite"/>
    </source>
</evidence>
<evidence type="ECO:0000303" key="7">
    <source>
    </source>
</evidence>
<evidence type="ECO:0000305" key="8"/>
<evidence type="ECO:0000312" key="9">
    <source>
        <dbReference type="EMBL" id="AAH31479.1"/>
    </source>
</evidence>
<evidence type="ECO:0000312" key="10">
    <source>
        <dbReference type="EMBL" id="AAH46828.1"/>
    </source>
</evidence>
<evidence type="ECO:0000312" key="11">
    <source>
        <dbReference type="EMBL" id="BAB69016.1"/>
    </source>
</evidence>
<evidence type="ECO:0007744" key="12">
    <source>
    </source>
</evidence>
<evidence type="ECO:0007744" key="13">
    <source>
    </source>
</evidence>
<evidence type="ECO:0007744" key="14">
    <source>
    </source>
</evidence>
<proteinExistence type="evidence at protein level"/>
<organism evidence="11">
    <name type="scientific">Mus musculus</name>
    <name type="common">Mouse</name>
    <dbReference type="NCBI Taxonomy" id="10090"/>
    <lineage>
        <taxon>Eukaryota</taxon>
        <taxon>Metazoa</taxon>
        <taxon>Chordata</taxon>
        <taxon>Craniata</taxon>
        <taxon>Vertebrata</taxon>
        <taxon>Euteleostomi</taxon>
        <taxon>Mammalia</taxon>
        <taxon>Eutheria</taxon>
        <taxon>Euarchontoglires</taxon>
        <taxon>Glires</taxon>
        <taxon>Rodentia</taxon>
        <taxon>Myomorpha</taxon>
        <taxon>Muroidea</taxon>
        <taxon>Muridae</taxon>
        <taxon>Murinae</taxon>
        <taxon>Mus</taxon>
        <taxon>Mus</taxon>
    </lineage>
</organism>
<sequence>MDSKKKSSTEAEGSKERGLVHVWQAGSFSLTPERLPGWGGKTVLQAALGVRHGVLLTEDGEVYSFGTLPWKSESAEICPSSPLLESALVGHHVITVATGSFHSGAVTESGVVYMWGENAAGQCAVANQQYVPEPSPVSISDSETSPSLAVRILQLACGEEHTLALSLSREIWAWGTGCQLGLITTTFPVTKPQKVEHLAGRVVLQVACGAFHSLALVQCLPPQDLKPVPERCNQCSQLLITMTDKEDHVIISDSHCCPLGVTLSESQAEKHASPAPSPHPEALDEQGEVFENTVVEAELNMGSSQTTSGSAISTQQNVVGTAEVSSARTAPSYPDTHAVTAYLQKLSEHSMRENHEPGEKPPQVQPLVEEAVPDLHSPPTTSTSALNSLVVSCASAVGVRVAATYEAGALSLKKVMNFYSTAPCETAAQSGSASTGPESLKDLREEQVKQESLQGKKSSSLMDIREEELEGGSRRLSLPGLLSQVSPRLLRKAARVKTRTVVLTPTYSGEADALLPSLRTEVWTWGKGKEGQLGHGDVLPRLQPLCVKCLDGKEVIHLEAGGSHSLALTAKSQVYSWGSNTFGQLGHSEFPTTVPRLSKVSSENGVWSVAAGQDYSLFLVDTEDFQPGLYYSGRQDRAEGDTLPENPSGTKTPVLLSCSKLGYISRVTAGKDSYLALVDKNIMGYIASLHELASTERRFYSKLSEIKSQILRPLLSLENLGTVTTVQLLQEVASRFSKLCYLIGQHGASLSSYLQGMKEASSLVIMKHSSLFLDSYTEYCTSVSNFLVMGGFQLLAKPAIDFLNKNQELLQDLSEVNDENTQLMEILNMLFFLPIRRLHNYAKVLLKLATCFEVTSPEYQKLQDSSSCYESLALHLGKKRKEAEYTLSFWKTFPGKMTDSLRKPERRLLCESSNRALSLQHAGRFSVNWFILFNDALVHAQFSTHHVFPLATLWAEPLSEEAGSVNGLKITTPEEQFTLISSTPQEKTKWLRAISQAVDQALRGTSDFPLYGGGSSVQRQEPPISRSAKYTFYKDTRLKDATYDGRWLSGKPHGRGVLKWPDGKMYSGMFRNGLEDGYGEYRIPNKALNKEDHYVGHWKEGKMCGQGVYSYASGEVFEGCFQDNMRHGHGLLRSGKLTSSSPSMFIGQWVMDKKAGYGVFDDITRGEKYMGMWQDDVCQGNGVVVTQFGLYYEGNFHLNKMMGNGVLLSEDDTIYEGEFSDDWTLSGKGTLTMPHGDYIEGYFSGEWGSGIKITGTYFKPSLYESDKDKPKAFRKLGNLAVAADEKWRAVFEECWRQLGCESPGQGEVWKAWDNIAVALTTNRRQHKDSPEILSRSQTQTLESLEYIPQHIGAFSVEKYDDIKKYLIKACDTPLHPLGRLVETLVAVYRMTYVGVGANRRLLQEAVKEIKSYLKRIFQLVRFLFPELPEEGSTIPLSAPLPTGRRSFCTGKSDSRSESPEPGYVVTSSGLLLPVLLPRLYPPLFMLYALDNDREEDIYWECVLRLNKQPDIALLGFLGVQKKFWPATLSILGESKKVLSTTKDACFASAVECLQQISTTFTPSDKLKVIQQTFEEISQSVLASLQEDFLWSMDDLFPVFLYVVLRARIRNLGSEVHLIEDLMDPFLQHGEQGIMFTTLKACYFQIQREKLN</sequence>
<gene>
    <name type="primary">Als2</name>
</gene>
<protein>
    <recommendedName>
        <fullName>Alsin</fullName>
    </recommendedName>
    <alternativeName>
        <fullName>Amyotrophic lateral sclerosis 2 protein homolog</fullName>
    </alternativeName>
</protein>
<reference evidence="8" key="1">
    <citation type="journal article" date="2001" name="Nat. Genet.">
        <title>A gene encoding a putative GTPase regulator is mutated in familial amyotrophic lateral sclerosis 2.</title>
        <authorList>
            <person name="Hadano S."/>
            <person name="Hand C.K."/>
            <person name="Osuga H."/>
            <person name="Yanagisawa Y."/>
            <person name="Otomo A."/>
            <person name="Devon R.S."/>
            <person name="Miyamoto N."/>
            <person name="Showguchi-Miyata J."/>
            <person name="Okada Y."/>
            <person name="Singaraja R."/>
            <person name="Figlewicz D.A."/>
            <person name="Kwiatkowski T."/>
            <person name="Hosler B.A."/>
            <person name="Sagie T."/>
            <person name="Skaug J."/>
            <person name="Nasir J."/>
            <person name="Brown R.H. Jr."/>
            <person name="Scherer S.W."/>
            <person name="Rouleau G.A."/>
            <person name="Hayden M.R."/>
            <person name="Ikeda J.-E."/>
        </authorList>
    </citation>
    <scope>NUCLEOTIDE SEQUENCE [MRNA] (ISOFORM 1)</scope>
</reference>
<reference key="2">
    <citation type="journal article" date="2009" name="PLoS Biol.">
        <title>Lineage-specific biology revealed by a finished genome assembly of the mouse.</title>
        <authorList>
            <person name="Church D.M."/>
            <person name="Goodstadt L."/>
            <person name="Hillier L.W."/>
            <person name="Zody M.C."/>
            <person name="Goldstein S."/>
            <person name="She X."/>
            <person name="Bult C.J."/>
            <person name="Agarwala R."/>
            <person name="Cherry J.L."/>
            <person name="DiCuccio M."/>
            <person name="Hlavina W."/>
            <person name="Kapustin Y."/>
            <person name="Meric P."/>
            <person name="Maglott D."/>
            <person name="Birtle Z."/>
            <person name="Marques A.C."/>
            <person name="Graves T."/>
            <person name="Zhou S."/>
            <person name="Teague B."/>
            <person name="Potamousis K."/>
            <person name="Churas C."/>
            <person name="Place M."/>
            <person name="Herschleb J."/>
            <person name="Runnheim R."/>
            <person name="Forrest D."/>
            <person name="Amos-Landgraf J."/>
            <person name="Schwartz D.C."/>
            <person name="Cheng Z."/>
            <person name="Lindblad-Toh K."/>
            <person name="Eichler E.E."/>
            <person name="Ponting C.P."/>
        </authorList>
    </citation>
    <scope>NUCLEOTIDE SEQUENCE [LARGE SCALE GENOMIC DNA]</scope>
    <source>
        <strain>C57BL/6J</strain>
    </source>
</reference>
<reference key="3">
    <citation type="submission" date="2005-07" db="EMBL/GenBank/DDBJ databases">
        <authorList>
            <person name="Mural R.J."/>
            <person name="Adams M.D."/>
            <person name="Myers E.W."/>
            <person name="Smith H.O."/>
            <person name="Venter J.C."/>
        </authorList>
    </citation>
    <scope>NUCLEOTIDE SEQUENCE [LARGE SCALE GENOMIC DNA]</scope>
</reference>
<reference evidence="8" key="4">
    <citation type="journal article" date="2004" name="Genome Res.">
        <title>The status, quality, and expansion of the NIH full-length cDNA project: the Mammalian Gene Collection (MGC).</title>
        <authorList>
            <consortium name="The MGC Project Team"/>
        </authorList>
    </citation>
    <scope>NUCLEOTIDE SEQUENCE [LARGE SCALE MRNA] (ISOFORMS 1 AND 2)</scope>
    <source>
        <strain evidence="10">C57BL/6J</strain>
        <tissue evidence="10">Brain</tissue>
        <tissue evidence="9">Mammary gland</tissue>
    </source>
</reference>
<reference key="5">
    <citation type="journal article" date="2005" name="Science">
        <title>The transcriptional landscape of the mammalian genome.</title>
        <authorList>
            <person name="Carninci P."/>
            <person name="Kasukawa T."/>
            <person name="Katayama S."/>
            <person name="Gough J."/>
            <person name="Frith M.C."/>
            <person name="Maeda N."/>
            <person name="Oyama R."/>
            <person name="Ravasi T."/>
            <person name="Lenhard B."/>
            <person name="Wells C."/>
            <person name="Kodzius R."/>
            <person name="Shimokawa K."/>
            <person name="Bajic V.B."/>
            <person name="Brenner S.E."/>
            <person name="Batalov S."/>
            <person name="Forrest A.R."/>
            <person name="Zavolan M."/>
            <person name="Davis M.J."/>
            <person name="Wilming L.G."/>
            <person name="Aidinis V."/>
            <person name="Allen J.E."/>
            <person name="Ambesi-Impiombato A."/>
            <person name="Apweiler R."/>
            <person name="Aturaliya R.N."/>
            <person name="Bailey T.L."/>
            <person name="Bansal M."/>
            <person name="Baxter L."/>
            <person name="Beisel K.W."/>
            <person name="Bersano T."/>
            <person name="Bono H."/>
            <person name="Chalk A.M."/>
            <person name="Chiu K.P."/>
            <person name="Choudhary V."/>
            <person name="Christoffels A."/>
            <person name="Clutterbuck D.R."/>
            <person name="Crowe M.L."/>
            <person name="Dalla E."/>
            <person name="Dalrymple B.P."/>
            <person name="de Bono B."/>
            <person name="Della Gatta G."/>
            <person name="di Bernardo D."/>
            <person name="Down T."/>
            <person name="Engstrom P."/>
            <person name="Fagiolini M."/>
            <person name="Faulkner G."/>
            <person name="Fletcher C.F."/>
            <person name="Fukushima T."/>
            <person name="Furuno M."/>
            <person name="Futaki S."/>
            <person name="Gariboldi M."/>
            <person name="Georgii-Hemming P."/>
            <person name="Gingeras T.R."/>
            <person name="Gojobori T."/>
            <person name="Green R.E."/>
            <person name="Gustincich S."/>
            <person name="Harbers M."/>
            <person name="Hayashi Y."/>
            <person name="Hensch T.K."/>
            <person name="Hirokawa N."/>
            <person name="Hill D."/>
            <person name="Huminiecki L."/>
            <person name="Iacono M."/>
            <person name="Ikeo K."/>
            <person name="Iwama A."/>
            <person name="Ishikawa T."/>
            <person name="Jakt M."/>
            <person name="Kanapin A."/>
            <person name="Katoh M."/>
            <person name="Kawasawa Y."/>
            <person name="Kelso J."/>
            <person name="Kitamura H."/>
            <person name="Kitano H."/>
            <person name="Kollias G."/>
            <person name="Krishnan S.P."/>
            <person name="Kruger A."/>
            <person name="Kummerfeld S.K."/>
            <person name="Kurochkin I.V."/>
            <person name="Lareau L.F."/>
            <person name="Lazarevic D."/>
            <person name="Lipovich L."/>
            <person name="Liu J."/>
            <person name="Liuni S."/>
            <person name="McWilliam S."/>
            <person name="Madan Babu M."/>
            <person name="Madera M."/>
            <person name="Marchionni L."/>
            <person name="Matsuda H."/>
            <person name="Matsuzawa S."/>
            <person name="Miki H."/>
            <person name="Mignone F."/>
            <person name="Miyake S."/>
            <person name="Morris K."/>
            <person name="Mottagui-Tabar S."/>
            <person name="Mulder N."/>
            <person name="Nakano N."/>
            <person name="Nakauchi H."/>
            <person name="Ng P."/>
            <person name="Nilsson R."/>
            <person name="Nishiguchi S."/>
            <person name="Nishikawa S."/>
            <person name="Nori F."/>
            <person name="Ohara O."/>
            <person name="Okazaki Y."/>
            <person name="Orlando V."/>
            <person name="Pang K.C."/>
            <person name="Pavan W.J."/>
            <person name="Pavesi G."/>
            <person name="Pesole G."/>
            <person name="Petrovsky N."/>
            <person name="Piazza S."/>
            <person name="Reed J."/>
            <person name="Reid J.F."/>
            <person name="Ring B.Z."/>
            <person name="Ringwald M."/>
            <person name="Rost B."/>
            <person name="Ruan Y."/>
            <person name="Salzberg S.L."/>
            <person name="Sandelin A."/>
            <person name="Schneider C."/>
            <person name="Schoenbach C."/>
            <person name="Sekiguchi K."/>
            <person name="Semple C.A."/>
            <person name="Seno S."/>
            <person name="Sessa L."/>
            <person name="Sheng Y."/>
            <person name="Shibata Y."/>
            <person name="Shimada H."/>
            <person name="Shimada K."/>
            <person name="Silva D."/>
            <person name="Sinclair B."/>
            <person name="Sperling S."/>
            <person name="Stupka E."/>
            <person name="Sugiura K."/>
            <person name="Sultana R."/>
            <person name="Takenaka Y."/>
            <person name="Taki K."/>
            <person name="Tammoja K."/>
            <person name="Tan S.L."/>
            <person name="Tang S."/>
            <person name="Taylor M.S."/>
            <person name="Tegner J."/>
            <person name="Teichmann S.A."/>
            <person name="Ueda H.R."/>
            <person name="van Nimwegen E."/>
            <person name="Verardo R."/>
            <person name="Wei C.L."/>
            <person name="Yagi K."/>
            <person name="Yamanishi H."/>
            <person name="Zabarovsky E."/>
            <person name="Zhu S."/>
            <person name="Zimmer A."/>
            <person name="Hide W."/>
            <person name="Bult C."/>
            <person name="Grimmond S.M."/>
            <person name="Teasdale R.D."/>
            <person name="Liu E.T."/>
            <person name="Brusic V."/>
            <person name="Quackenbush J."/>
            <person name="Wahlestedt C."/>
            <person name="Mattick J.S."/>
            <person name="Hume D.A."/>
            <person name="Kai C."/>
            <person name="Sasaki D."/>
            <person name="Tomaru Y."/>
            <person name="Fukuda S."/>
            <person name="Kanamori-Katayama M."/>
            <person name="Suzuki M."/>
            <person name="Aoki J."/>
            <person name="Arakawa T."/>
            <person name="Iida J."/>
            <person name="Imamura K."/>
            <person name="Itoh M."/>
            <person name="Kato T."/>
            <person name="Kawaji H."/>
            <person name="Kawagashira N."/>
            <person name="Kawashima T."/>
            <person name="Kojima M."/>
            <person name="Kondo S."/>
            <person name="Konno H."/>
            <person name="Nakano K."/>
            <person name="Ninomiya N."/>
            <person name="Nishio T."/>
            <person name="Okada M."/>
            <person name="Plessy C."/>
            <person name="Shibata K."/>
            <person name="Shiraki T."/>
            <person name="Suzuki S."/>
            <person name="Tagami M."/>
            <person name="Waki K."/>
            <person name="Watahiki A."/>
            <person name="Okamura-Oho Y."/>
            <person name="Suzuki H."/>
            <person name="Kawai J."/>
            <person name="Hayashizaki Y."/>
        </authorList>
    </citation>
    <scope>NUCLEOTIDE SEQUENCE [LARGE SCALE MRNA] OF 847-1651 (ISOFORM 1)</scope>
    <source>
        <strain>C57BL/6J</strain>
    </source>
</reference>
<reference key="6">
    <citation type="journal article" date="2004" name="Mol. Cell. Proteomics">
        <title>Phosphoproteomic analysis of the developing mouse brain.</title>
        <authorList>
            <person name="Ballif B.A."/>
            <person name="Villen J."/>
            <person name="Beausoleil S.A."/>
            <person name="Schwartz D."/>
            <person name="Gygi S.P."/>
        </authorList>
    </citation>
    <scope>IDENTIFICATION BY MASS SPECTROMETRY [LARGE SCALE ANALYSIS]</scope>
    <source>
        <tissue>Embryonic brain</tissue>
    </source>
</reference>
<reference key="7">
    <citation type="journal article" date="2007" name="Proc. Natl. Acad. Sci. U.S.A.">
        <title>Large-scale phosphorylation analysis of mouse liver.</title>
        <authorList>
            <person name="Villen J."/>
            <person name="Beausoleil S.A."/>
            <person name="Gerber S.A."/>
            <person name="Gygi S.P."/>
        </authorList>
    </citation>
    <scope>PHOSPHORYLATION [LARGE SCALE ANALYSIS] AT SER-477 AND SER-486</scope>
    <scope>IDENTIFICATION BY MASS SPECTROMETRY [LARGE SCALE ANALYSIS]</scope>
    <source>
        <tissue>Liver</tissue>
    </source>
</reference>
<reference key="8">
    <citation type="journal article" date="2010" name="Cell">
        <title>A tissue-specific atlas of mouse protein phosphorylation and expression.</title>
        <authorList>
            <person name="Huttlin E.L."/>
            <person name="Jedrychowski M.P."/>
            <person name="Elias J.E."/>
            <person name="Goswami T."/>
            <person name="Rad R."/>
            <person name="Beausoleil S.A."/>
            <person name="Villen J."/>
            <person name="Haas W."/>
            <person name="Sowa M.E."/>
            <person name="Gygi S.P."/>
        </authorList>
    </citation>
    <scope>PHOSPHORYLATION [LARGE SCALE ANALYSIS] AT SER-477 AND SER-486</scope>
    <scope>IDENTIFICATION BY MASS SPECTROMETRY [LARGE SCALE ANALYSIS]</scope>
    <source>
        <tissue>Brain</tissue>
        <tissue>Brown adipose tissue</tissue>
        <tissue>Heart</tissue>
        <tissue>Kidney</tissue>
        <tissue>Liver</tissue>
        <tissue>Lung</tissue>
        <tissue>Pancreas</tissue>
        <tissue>Spleen</tissue>
        <tissue>Testis</tissue>
    </source>
</reference>
<reference key="9">
    <citation type="journal article" date="2013" name="Mol. Cell">
        <title>SIRT5-mediated lysine desuccinylation impacts diverse metabolic pathways.</title>
        <authorList>
            <person name="Park J."/>
            <person name="Chen Y."/>
            <person name="Tishkoff D.X."/>
            <person name="Peng C."/>
            <person name="Tan M."/>
            <person name="Dai L."/>
            <person name="Xie Z."/>
            <person name="Zhang Y."/>
            <person name="Zwaans B.M."/>
            <person name="Skinner M.E."/>
            <person name="Lombard D.B."/>
            <person name="Zhao Y."/>
        </authorList>
    </citation>
    <scope>ACETYLATION [LARGE SCALE ANALYSIS] AT LYS-527</scope>
    <scope>IDENTIFICATION BY MASS SPECTROMETRY [LARGE SCALE ANALYSIS]</scope>
    <source>
        <tissue>Embryonic fibroblast</tissue>
    </source>
</reference>
<comment type="function">
    <text evidence="1">May act as a GTPase regulator. Controls survival and growth of spinal motoneurons.</text>
</comment>
<comment type="subunit">
    <text evidence="1">Forms a heteromeric complex with ALS2CL. Interacts with ALS2CL (By similarity).</text>
</comment>
<comment type="alternative products">
    <event type="alternative splicing"/>
    <isoform>
        <id>Q920R0-1</id>
        <name evidence="8">1</name>
        <sequence type="displayed"/>
    </isoform>
    <isoform>
        <id>Q920R0-2</id>
        <name evidence="8">2</name>
        <sequence type="described" ref="VSP_050525 VSP_050526"/>
    </isoform>
</comment>
<name>ALS2_MOUSE</name>
<keyword id="KW-0007">Acetylation</keyword>
<keyword id="KW-0025">Alternative splicing</keyword>
<keyword id="KW-0344">Guanine-nucleotide releasing factor</keyword>
<keyword id="KW-0597">Phosphoprotein</keyword>
<keyword id="KW-1185">Reference proteome</keyword>
<keyword id="KW-0677">Repeat</keyword>